<dbReference type="EC" id="1.9.6.1" evidence="1"/>
<dbReference type="EMBL" id="CP000822">
    <property type="protein sequence ID" value="ABV11724.1"/>
    <property type="molecule type" value="Genomic_DNA"/>
</dbReference>
<dbReference type="RefSeq" id="WP_012131548.1">
    <property type="nucleotide sequence ID" value="NC_009792.1"/>
</dbReference>
<dbReference type="SMR" id="A8AE11"/>
<dbReference type="STRING" id="290338.CKO_00569"/>
<dbReference type="GeneID" id="45134805"/>
<dbReference type="KEGG" id="cko:CKO_00569"/>
<dbReference type="HOGENOM" id="CLU_000422_13_4_6"/>
<dbReference type="OrthoDB" id="9816402at2"/>
<dbReference type="Proteomes" id="UP000008148">
    <property type="component" value="Chromosome"/>
</dbReference>
<dbReference type="GO" id="GO:0016020">
    <property type="term" value="C:membrane"/>
    <property type="evidence" value="ECO:0007669"/>
    <property type="project" value="TreeGrafter"/>
</dbReference>
<dbReference type="GO" id="GO:0009325">
    <property type="term" value="C:nitrate reductase complex"/>
    <property type="evidence" value="ECO:0007669"/>
    <property type="project" value="TreeGrafter"/>
</dbReference>
<dbReference type="GO" id="GO:0042597">
    <property type="term" value="C:periplasmic space"/>
    <property type="evidence" value="ECO:0007669"/>
    <property type="project" value="UniProtKB-SubCell"/>
</dbReference>
<dbReference type="GO" id="GO:0051539">
    <property type="term" value="F:4 iron, 4 sulfur cluster binding"/>
    <property type="evidence" value="ECO:0007669"/>
    <property type="project" value="UniProtKB-KW"/>
</dbReference>
<dbReference type="GO" id="GO:0009055">
    <property type="term" value="F:electron transfer activity"/>
    <property type="evidence" value="ECO:0007669"/>
    <property type="project" value="UniProtKB-UniRule"/>
</dbReference>
<dbReference type="GO" id="GO:0005506">
    <property type="term" value="F:iron ion binding"/>
    <property type="evidence" value="ECO:0007669"/>
    <property type="project" value="UniProtKB-UniRule"/>
</dbReference>
<dbReference type="GO" id="GO:0030151">
    <property type="term" value="F:molybdenum ion binding"/>
    <property type="evidence" value="ECO:0007669"/>
    <property type="project" value="InterPro"/>
</dbReference>
<dbReference type="GO" id="GO:0043546">
    <property type="term" value="F:molybdopterin cofactor binding"/>
    <property type="evidence" value="ECO:0007669"/>
    <property type="project" value="InterPro"/>
</dbReference>
<dbReference type="GO" id="GO:0050140">
    <property type="term" value="F:nitrate reductase (cytochrome) activity"/>
    <property type="evidence" value="ECO:0007669"/>
    <property type="project" value="UniProtKB-EC"/>
</dbReference>
<dbReference type="GO" id="GO:0045333">
    <property type="term" value="P:cellular respiration"/>
    <property type="evidence" value="ECO:0007669"/>
    <property type="project" value="UniProtKB-ARBA"/>
</dbReference>
<dbReference type="GO" id="GO:0006777">
    <property type="term" value="P:Mo-molybdopterin cofactor biosynthetic process"/>
    <property type="evidence" value="ECO:0007669"/>
    <property type="project" value="UniProtKB-UniRule"/>
</dbReference>
<dbReference type="GO" id="GO:0042128">
    <property type="term" value="P:nitrate assimilation"/>
    <property type="evidence" value="ECO:0007669"/>
    <property type="project" value="UniProtKB-UniRule"/>
</dbReference>
<dbReference type="CDD" id="cd02791">
    <property type="entry name" value="MopB_CT_Nitrate-R-NapA-like"/>
    <property type="match status" value="1"/>
</dbReference>
<dbReference type="CDD" id="cd02754">
    <property type="entry name" value="MopB_Nitrate-R-NapA-like"/>
    <property type="match status" value="1"/>
</dbReference>
<dbReference type="FunFam" id="2.40.40.20:FF:000005">
    <property type="entry name" value="Periplasmic nitrate reductase"/>
    <property type="match status" value="1"/>
</dbReference>
<dbReference type="FunFam" id="3.40.228.10:FF:000001">
    <property type="entry name" value="Periplasmic nitrate reductase"/>
    <property type="match status" value="1"/>
</dbReference>
<dbReference type="Gene3D" id="2.40.40.20">
    <property type="match status" value="1"/>
</dbReference>
<dbReference type="Gene3D" id="3.30.200.210">
    <property type="match status" value="1"/>
</dbReference>
<dbReference type="Gene3D" id="3.40.50.740">
    <property type="match status" value="1"/>
</dbReference>
<dbReference type="Gene3D" id="3.40.228.10">
    <property type="entry name" value="Dimethylsulfoxide Reductase, domain 2"/>
    <property type="match status" value="1"/>
</dbReference>
<dbReference type="HAMAP" id="MF_01630">
    <property type="entry name" value="Nitrate_reduct_NapA"/>
    <property type="match status" value="1"/>
</dbReference>
<dbReference type="InterPro" id="IPR009010">
    <property type="entry name" value="Asp_de-COase-like_dom_sf"/>
</dbReference>
<dbReference type="InterPro" id="IPR041957">
    <property type="entry name" value="CT_Nitrate-R-NapA-like"/>
</dbReference>
<dbReference type="InterPro" id="IPR006657">
    <property type="entry name" value="MoPterin_dinucl-bd_dom"/>
</dbReference>
<dbReference type="InterPro" id="IPR006656">
    <property type="entry name" value="Mopterin_OxRdtase"/>
</dbReference>
<dbReference type="InterPro" id="IPR006963">
    <property type="entry name" value="Mopterin_OxRdtase_4Fe-4S_dom"/>
</dbReference>
<dbReference type="InterPro" id="IPR027467">
    <property type="entry name" value="MopterinOxRdtase_cofactor_BS"/>
</dbReference>
<dbReference type="InterPro" id="IPR010051">
    <property type="entry name" value="Periplasm_NO3_reductase_lsu"/>
</dbReference>
<dbReference type="InterPro" id="IPR050123">
    <property type="entry name" value="Prok_molybdopt-oxidoreductase"/>
</dbReference>
<dbReference type="InterPro" id="IPR006311">
    <property type="entry name" value="TAT_signal"/>
</dbReference>
<dbReference type="InterPro" id="IPR019546">
    <property type="entry name" value="TAT_signal_bac_arc"/>
</dbReference>
<dbReference type="NCBIfam" id="TIGR01706">
    <property type="entry name" value="NAPA"/>
    <property type="match status" value="1"/>
</dbReference>
<dbReference type="NCBIfam" id="NF010055">
    <property type="entry name" value="PRK13532.1"/>
    <property type="match status" value="1"/>
</dbReference>
<dbReference type="NCBIfam" id="TIGR01409">
    <property type="entry name" value="TAT_signal_seq"/>
    <property type="match status" value="1"/>
</dbReference>
<dbReference type="PANTHER" id="PTHR43105:SF11">
    <property type="entry name" value="PERIPLASMIC NITRATE REDUCTASE"/>
    <property type="match status" value="1"/>
</dbReference>
<dbReference type="PANTHER" id="PTHR43105">
    <property type="entry name" value="RESPIRATORY NITRATE REDUCTASE"/>
    <property type="match status" value="1"/>
</dbReference>
<dbReference type="Pfam" id="PF04879">
    <property type="entry name" value="Molybdop_Fe4S4"/>
    <property type="match status" value="1"/>
</dbReference>
<dbReference type="Pfam" id="PF00384">
    <property type="entry name" value="Molybdopterin"/>
    <property type="match status" value="1"/>
</dbReference>
<dbReference type="Pfam" id="PF01568">
    <property type="entry name" value="Molydop_binding"/>
    <property type="match status" value="1"/>
</dbReference>
<dbReference type="SMART" id="SM00926">
    <property type="entry name" value="Molybdop_Fe4S4"/>
    <property type="match status" value="1"/>
</dbReference>
<dbReference type="SUPFAM" id="SSF50692">
    <property type="entry name" value="ADC-like"/>
    <property type="match status" value="1"/>
</dbReference>
<dbReference type="SUPFAM" id="SSF53706">
    <property type="entry name" value="Formate dehydrogenase/DMSO reductase, domains 1-3"/>
    <property type="match status" value="1"/>
</dbReference>
<dbReference type="PROSITE" id="PS51669">
    <property type="entry name" value="4FE4S_MOW_BIS_MGD"/>
    <property type="match status" value="1"/>
</dbReference>
<dbReference type="PROSITE" id="PS00551">
    <property type="entry name" value="MOLYBDOPTERIN_PROK_1"/>
    <property type="match status" value="1"/>
</dbReference>
<dbReference type="PROSITE" id="PS51318">
    <property type="entry name" value="TAT"/>
    <property type="match status" value="1"/>
</dbReference>
<evidence type="ECO:0000255" key="1">
    <source>
        <dbReference type="HAMAP-Rule" id="MF_01630"/>
    </source>
</evidence>
<accession>A8AE11</accession>
<feature type="signal peptide" description="Tat-type signal" evidence="1">
    <location>
        <begin position="1"/>
        <end position="31"/>
    </location>
</feature>
<feature type="chain" id="PRO_1000069715" description="Periplasmic nitrate reductase" evidence="1">
    <location>
        <begin position="32"/>
        <end position="828"/>
    </location>
</feature>
<feature type="domain" description="4Fe-4S Mo/W bis-MGD-type" evidence="1">
    <location>
        <begin position="39"/>
        <end position="95"/>
    </location>
</feature>
<feature type="binding site" evidence="1">
    <location>
        <position position="46"/>
    </location>
    <ligand>
        <name>[4Fe-4S] cluster</name>
        <dbReference type="ChEBI" id="CHEBI:49883"/>
    </ligand>
</feature>
<feature type="binding site" evidence="1">
    <location>
        <position position="49"/>
    </location>
    <ligand>
        <name>[4Fe-4S] cluster</name>
        <dbReference type="ChEBI" id="CHEBI:49883"/>
    </ligand>
</feature>
<feature type="binding site" evidence="1">
    <location>
        <position position="53"/>
    </location>
    <ligand>
        <name>[4Fe-4S] cluster</name>
        <dbReference type="ChEBI" id="CHEBI:49883"/>
    </ligand>
</feature>
<feature type="binding site" evidence="1">
    <location>
        <position position="81"/>
    </location>
    <ligand>
        <name>[4Fe-4S] cluster</name>
        <dbReference type="ChEBI" id="CHEBI:49883"/>
    </ligand>
</feature>
<feature type="binding site" evidence="1">
    <location>
        <position position="83"/>
    </location>
    <ligand>
        <name>Mo-bis(molybdopterin guanine dinucleotide)</name>
        <dbReference type="ChEBI" id="CHEBI:60539"/>
    </ligand>
</feature>
<feature type="binding site" evidence="1">
    <location>
        <position position="150"/>
    </location>
    <ligand>
        <name>Mo-bis(molybdopterin guanine dinucleotide)</name>
        <dbReference type="ChEBI" id="CHEBI:60539"/>
    </ligand>
</feature>
<feature type="binding site" evidence="1">
    <location>
        <position position="175"/>
    </location>
    <ligand>
        <name>Mo-bis(molybdopterin guanine dinucleotide)</name>
        <dbReference type="ChEBI" id="CHEBI:60539"/>
    </ligand>
</feature>
<feature type="binding site" evidence="1">
    <location>
        <position position="179"/>
    </location>
    <ligand>
        <name>Mo-bis(molybdopterin guanine dinucleotide)</name>
        <dbReference type="ChEBI" id="CHEBI:60539"/>
    </ligand>
</feature>
<feature type="binding site" evidence="1">
    <location>
        <begin position="212"/>
        <end position="219"/>
    </location>
    <ligand>
        <name>Mo-bis(molybdopterin guanine dinucleotide)</name>
        <dbReference type="ChEBI" id="CHEBI:60539"/>
    </ligand>
</feature>
<feature type="binding site" evidence="1">
    <location>
        <begin position="243"/>
        <end position="247"/>
    </location>
    <ligand>
        <name>Mo-bis(molybdopterin guanine dinucleotide)</name>
        <dbReference type="ChEBI" id="CHEBI:60539"/>
    </ligand>
</feature>
<feature type="binding site" evidence="1">
    <location>
        <begin position="262"/>
        <end position="264"/>
    </location>
    <ligand>
        <name>Mo-bis(molybdopterin guanine dinucleotide)</name>
        <dbReference type="ChEBI" id="CHEBI:60539"/>
    </ligand>
</feature>
<feature type="binding site" evidence="1">
    <location>
        <position position="372"/>
    </location>
    <ligand>
        <name>Mo-bis(molybdopterin guanine dinucleotide)</name>
        <dbReference type="ChEBI" id="CHEBI:60539"/>
    </ligand>
</feature>
<feature type="binding site" evidence="1">
    <location>
        <position position="376"/>
    </location>
    <ligand>
        <name>Mo-bis(molybdopterin guanine dinucleotide)</name>
        <dbReference type="ChEBI" id="CHEBI:60539"/>
    </ligand>
</feature>
<feature type="binding site" evidence="1">
    <location>
        <position position="482"/>
    </location>
    <ligand>
        <name>Mo-bis(molybdopterin guanine dinucleotide)</name>
        <dbReference type="ChEBI" id="CHEBI:60539"/>
    </ligand>
</feature>
<feature type="binding site" evidence="1">
    <location>
        <begin position="508"/>
        <end position="509"/>
    </location>
    <ligand>
        <name>Mo-bis(molybdopterin guanine dinucleotide)</name>
        <dbReference type="ChEBI" id="CHEBI:60539"/>
    </ligand>
</feature>
<feature type="binding site" evidence="1">
    <location>
        <position position="531"/>
    </location>
    <ligand>
        <name>Mo-bis(molybdopterin guanine dinucleotide)</name>
        <dbReference type="ChEBI" id="CHEBI:60539"/>
    </ligand>
</feature>
<feature type="binding site" evidence="1">
    <location>
        <position position="558"/>
    </location>
    <ligand>
        <name>Mo-bis(molybdopterin guanine dinucleotide)</name>
        <dbReference type="ChEBI" id="CHEBI:60539"/>
    </ligand>
</feature>
<feature type="binding site" evidence="1">
    <location>
        <begin position="718"/>
        <end position="727"/>
    </location>
    <ligand>
        <name>Mo-bis(molybdopterin guanine dinucleotide)</name>
        <dbReference type="ChEBI" id="CHEBI:60539"/>
    </ligand>
</feature>
<feature type="binding site" evidence="1">
    <location>
        <position position="794"/>
    </location>
    <ligand>
        <name>substrate</name>
    </ligand>
</feature>
<feature type="binding site" evidence="1">
    <location>
        <position position="802"/>
    </location>
    <ligand>
        <name>Mo-bis(molybdopterin guanine dinucleotide)</name>
        <dbReference type="ChEBI" id="CHEBI:60539"/>
    </ligand>
</feature>
<feature type="binding site" evidence="1">
    <location>
        <position position="819"/>
    </location>
    <ligand>
        <name>Mo-bis(molybdopterin guanine dinucleotide)</name>
        <dbReference type="ChEBI" id="CHEBI:60539"/>
    </ligand>
</feature>
<sequence length="828" mass="92994">MKLSRRSFMKANAVAAAAAAAGLSVPGVARAVVGQQEAIKWDKAPCRFCGTGCGVLVGTQQGRIVACQGDPDAPVNRGLNCIKGYFLPKIMYGKDRLTQPMLRMKDGQYNKEGEFTPISWDQAFDVMEEKFKASLKEKGPEAIGMFGSGQWTVWEGYAAAKLFKAGFRSNNIDPNARHCMASAVVGFMRTFGMDEPMGCYDDIEQADAFVLWGSNMAEMHPILWSRITNRRLSDPNVNVAVLSTFQHRSFELADNGIVFTPQSDLVILNYIANYIIQNNAINQDFFSKYVNLRKGTTDIGYGLRPTHPLEKAAKNPGSDASEPMSFDEYKAFVAEYTLEKTAEMTGVPKDQLEQLAQLYADPKKKVISYWTMGFNQHTRGVWANNLVYNLHLLTGKISQPGCGPFSLTGQPSACGTAREVGTFSHRLPADMVVTNEKHRDICEKHWQIPTGTIPAKIGLHAVAQDRALKDGKLNVYWVMCNNNMQAGPNINEERMPGWRDPRNFVIVSDPYPTVSALAADLILPTAMWVEKEGAYGNAERRTQFWRQQIKAPGEAKSDLWQLVQFARRFKTEEVWPEDLLAQKPELRGKTLYDVLFATPAVSKFPLTDLAEDQLNDESRELGFYLQKGLFEEYAWFGRGHGHDLAPFDDYHKARGLRWPVVDGKETQWRYSEGHDPYVKAGEGYKFYGKPDGKAVIFALPFEPAAEAPDKEYDLWLSTGRVLEHWHTGSMTRRVPELHRAFPEAVLFIHPLDAKTRDLRRGDKVKVISRRGEVISVVETRGRNRPPQGLVYMPFFDAAQLVNNLTLDATDPLSKETDFKKCAVKLAKV</sequence>
<keyword id="KW-0004">4Fe-4S</keyword>
<keyword id="KW-0249">Electron transport</keyword>
<keyword id="KW-0408">Iron</keyword>
<keyword id="KW-0411">Iron-sulfur</keyword>
<keyword id="KW-0479">Metal-binding</keyword>
<keyword id="KW-0500">Molybdenum</keyword>
<keyword id="KW-0534">Nitrate assimilation</keyword>
<keyword id="KW-0560">Oxidoreductase</keyword>
<keyword id="KW-0574">Periplasm</keyword>
<keyword id="KW-1185">Reference proteome</keyword>
<keyword id="KW-0732">Signal</keyword>
<keyword id="KW-0813">Transport</keyword>
<name>NAPA_CITK8</name>
<protein>
    <recommendedName>
        <fullName evidence="1">Periplasmic nitrate reductase</fullName>
        <ecNumber evidence="1">1.9.6.1</ecNumber>
    </recommendedName>
</protein>
<gene>
    <name evidence="1" type="primary">napA</name>
    <name type="ordered locus">CKO_00569</name>
</gene>
<organism>
    <name type="scientific">Citrobacter koseri (strain ATCC BAA-895 / CDC 4225-83 / SGSC4696)</name>
    <dbReference type="NCBI Taxonomy" id="290338"/>
    <lineage>
        <taxon>Bacteria</taxon>
        <taxon>Pseudomonadati</taxon>
        <taxon>Pseudomonadota</taxon>
        <taxon>Gammaproteobacteria</taxon>
        <taxon>Enterobacterales</taxon>
        <taxon>Enterobacteriaceae</taxon>
        <taxon>Citrobacter</taxon>
    </lineage>
</organism>
<proteinExistence type="inferred from homology"/>
<reference key="1">
    <citation type="submission" date="2007-08" db="EMBL/GenBank/DDBJ databases">
        <authorList>
            <consortium name="The Citrobacter koseri Genome Sequencing Project"/>
            <person name="McClelland M."/>
            <person name="Sanderson E.K."/>
            <person name="Porwollik S."/>
            <person name="Spieth J."/>
            <person name="Clifton W.S."/>
            <person name="Latreille P."/>
            <person name="Courtney L."/>
            <person name="Wang C."/>
            <person name="Pepin K."/>
            <person name="Bhonagiri V."/>
            <person name="Nash W."/>
            <person name="Johnson M."/>
            <person name="Thiruvilangam P."/>
            <person name="Wilson R."/>
        </authorList>
    </citation>
    <scope>NUCLEOTIDE SEQUENCE [LARGE SCALE GENOMIC DNA]</scope>
    <source>
        <strain>ATCC BAA-895 / CDC 4225-83 / SGSC4696</strain>
    </source>
</reference>
<comment type="function">
    <text evidence="1">Catalytic subunit of the periplasmic nitrate reductase complex NapAB. Receives electrons from NapB and catalyzes the reduction of nitrate to nitrite.</text>
</comment>
<comment type="catalytic activity">
    <reaction evidence="1">
        <text>2 Fe(II)-[cytochrome] + nitrate + 2 H(+) = 2 Fe(III)-[cytochrome] + nitrite + H2O</text>
        <dbReference type="Rhea" id="RHEA:12909"/>
        <dbReference type="Rhea" id="RHEA-COMP:11777"/>
        <dbReference type="Rhea" id="RHEA-COMP:11778"/>
        <dbReference type="ChEBI" id="CHEBI:15377"/>
        <dbReference type="ChEBI" id="CHEBI:15378"/>
        <dbReference type="ChEBI" id="CHEBI:16301"/>
        <dbReference type="ChEBI" id="CHEBI:17632"/>
        <dbReference type="ChEBI" id="CHEBI:29033"/>
        <dbReference type="ChEBI" id="CHEBI:29034"/>
        <dbReference type="EC" id="1.9.6.1"/>
    </reaction>
</comment>
<comment type="cofactor">
    <cofactor evidence="1">
        <name>[4Fe-4S] cluster</name>
        <dbReference type="ChEBI" id="CHEBI:49883"/>
    </cofactor>
    <text evidence="1">Binds 1 [4Fe-4S] cluster.</text>
</comment>
<comment type="cofactor">
    <cofactor evidence="1">
        <name>Mo-bis(molybdopterin guanine dinucleotide)</name>
        <dbReference type="ChEBI" id="CHEBI:60539"/>
    </cofactor>
    <text evidence="1">Binds 1 molybdenum-bis(molybdopterin guanine dinucleotide) (Mo-bis-MGD) cofactor per subunit.</text>
</comment>
<comment type="subunit">
    <text evidence="1">Component of the periplasmic nitrate reductase NapAB complex composed of NapA and NapB.</text>
</comment>
<comment type="subcellular location">
    <subcellularLocation>
        <location evidence="1">Periplasm</location>
    </subcellularLocation>
</comment>
<comment type="PTM">
    <text evidence="1">Predicted to be exported by the Tat system. The position of the signal peptide cleavage has not been experimentally proven.</text>
</comment>
<comment type="similarity">
    <text evidence="1">Belongs to the prokaryotic molybdopterin-containing oxidoreductase family. NasA/NapA/NarB subfamily.</text>
</comment>